<feature type="chain" id="PRO_0000091162" description="Elongation factor G">
    <location>
        <begin position="1"/>
        <end position="682"/>
    </location>
</feature>
<feature type="domain" description="tr-type G">
    <location>
        <begin position="8"/>
        <end position="282"/>
    </location>
</feature>
<feature type="binding site" evidence="1">
    <location>
        <begin position="17"/>
        <end position="24"/>
    </location>
    <ligand>
        <name>GTP</name>
        <dbReference type="ChEBI" id="CHEBI:37565"/>
    </ligand>
</feature>
<feature type="binding site" evidence="1">
    <location>
        <begin position="81"/>
        <end position="85"/>
    </location>
    <ligand>
        <name>GTP</name>
        <dbReference type="ChEBI" id="CHEBI:37565"/>
    </ligand>
</feature>
<feature type="binding site" evidence="1">
    <location>
        <begin position="135"/>
        <end position="138"/>
    </location>
    <ligand>
        <name>GTP</name>
        <dbReference type="ChEBI" id="CHEBI:37565"/>
    </ligand>
</feature>
<comment type="function">
    <text evidence="1">Catalyzes the GTP-dependent ribosomal translocation step during translation elongation. During this step, the ribosome changes from the pre-translocational (PRE) to the post-translocational (POST) state as the newly formed A-site-bound peptidyl-tRNA and P-site-bound deacylated tRNA move to the P and E sites, respectively. Catalyzes the coordinated movement of the two tRNA molecules, the mRNA and conformational changes in the ribosome.</text>
</comment>
<comment type="subcellular location">
    <subcellularLocation>
        <location evidence="1">Cytoplasm</location>
    </subcellularLocation>
</comment>
<comment type="similarity">
    <text evidence="1">Belongs to the TRAFAC class translation factor GTPase superfamily. Classic translation factor GTPase family. EF-G/EF-2 subfamily.</text>
</comment>
<evidence type="ECO:0000255" key="1">
    <source>
        <dbReference type="HAMAP-Rule" id="MF_00054"/>
    </source>
</evidence>
<protein>
    <recommendedName>
        <fullName evidence="1">Elongation factor G</fullName>
        <shortName evidence="1">EF-G</shortName>
    </recommendedName>
</protein>
<reference key="1">
    <citation type="journal article" date="2002" name="Nucleic Acids Res.">
        <title>The complete genomic sequence of Mycoplasma penetrans, an intracellular bacterial pathogen in humans.</title>
        <authorList>
            <person name="Sasaki Y."/>
            <person name="Ishikawa J."/>
            <person name="Yamashita A."/>
            <person name="Oshima K."/>
            <person name="Kenri T."/>
            <person name="Furuya K."/>
            <person name="Yoshino C."/>
            <person name="Horino A."/>
            <person name="Shiba T."/>
            <person name="Sasaki T."/>
            <person name="Hattori M."/>
        </authorList>
    </citation>
    <scope>NUCLEOTIDE SEQUENCE [LARGE SCALE GENOMIC DNA]</scope>
    <source>
        <strain>HF-2</strain>
    </source>
</reference>
<name>EFG_MALP2</name>
<proteinExistence type="inferred from homology"/>
<organism>
    <name type="scientific">Malacoplasma penetrans (strain HF-2)</name>
    <name type="common">Mycoplasma penetrans</name>
    <dbReference type="NCBI Taxonomy" id="272633"/>
    <lineage>
        <taxon>Bacteria</taxon>
        <taxon>Bacillati</taxon>
        <taxon>Mycoplasmatota</taxon>
        <taxon>Mycoplasmoidales</taxon>
        <taxon>Mycoplasmoidaceae</taxon>
        <taxon>Malacoplasma</taxon>
    </lineage>
</organism>
<dbReference type="EMBL" id="BA000026">
    <property type="protein sequence ID" value="BAC43821.1"/>
    <property type="molecule type" value="Genomic_DNA"/>
</dbReference>
<dbReference type="RefSeq" id="WP_011076857.1">
    <property type="nucleotide sequence ID" value="NC_004432.1"/>
</dbReference>
<dbReference type="SMR" id="Q8EX19"/>
<dbReference type="FunCoup" id="Q8EX19">
    <property type="interactions" value="263"/>
</dbReference>
<dbReference type="STRING" id="272633.gene:10731122"/>
<dbReference type="KEGG" id="mpe:MYPE310"/>
<dbReference type="eggNOG" id="COG0480">
    <property type="taxonomic scope" value="Bacteria"/>
</dbReference>
<dbReference type="HOGENOM" id="CLU_002794_4_1_14"/>
<dbReference type="InParanoid" id="Q8EX19"/>
<dbReference type="Proteomes" id="UP000002522">
    <property type="component" value="Chromosome"/>
</dbReference>
<dbReference type="GO" id="GO:0005737">
    <property type="term" value="C:cytoplasm"/>
    <property type="evidence" value="ECO:0007669"/>
    <property type="project" value="UniProtKB-SubCell"/>
</dbReference>
<dbReference type="GO" id="GO:0005525">
    <property type="term" value="F:GTP binding"/>
    <property type="evidence" value="ECO:0007669"/>
    <property type="project" value="UniProtKB-UniRule"/>
</dbReference>
<dbReference type="GO" id="GO:0003924">
    <property type="term" value="F:GTPase activity"/>
    <property type="evidence" value="ECO:0007669"/>
    <property type="project" value="InterPro"/>
</dbReference>
<dbReference type="GO" id="GO:0003746">
    <property type="term" value="F:translation elongation factor activity"/>
    <property type="evidence" value="ECO:0007669"/>
    <property type="project" value="UniProtKB-UniRule"/>
</dbReference>
<dbReference type="GO" id="GO:0032790">
    <property type="term" value="P:ribosome disassembly"/>
    <property type="evidence" value="ECO:0007669"/>
    <property type="project" value="TreeGrafter"/>
</dbReference>
<dbReference type="CDD" id="cd01886">
    <property type="entry name" value="EF-G"/>
    <property type="match status" value="1"/>
</dbReference>
<dbReference type="CDD" id="cd16262">
    <property type="entry name" value="EFG_III"/>
    <property type="match status" value="1"/>
</dbReference>
<dbReference type="CDD" id="cd01434">
    <property type="entry name" value="EFG_mtEFG1_IV"/>
    <property type="match status" value="1"/>
</dbReference>
<dbReference type="CDD" id="cd03713">
    <property type="entry name" value="EFG_mtEFG_C"/>
    <property type="match status" value="1"/>
</dbReference>
<dbReference type="CDD" id="cd04088">
    <property type="entry name" value="EFG_mtEFG_II"/>
    <property type="match status" value="1"/>
</dbReference>
<dbReference type="FunFam" id="2.40.30.10:FF:000006">
    <property type="entry name" value="Elongation factor G"/>
    <property type="match status" value="1"/>
</dbReference>
<dbReference type="FunFam" id="3.30.230.10:FF:000003">
    <property type="entry name" value="Elongation factor G"/>
    <property type="match status" value="1"/>
</dbReference>
<dbReference type="FunFam" id="3.30.70.240:FF:000001">
    <property type="entry name" value="Elongation factor G"/>
    <property type="match status" value="1"/>
</dbReference>
<dbReference type="FunFam" id="3.30.70.870:FF:000001">
    <property type="entry name" value="Elongation factor G"/>
    <property type="match status" value="1"/>
</dbReference>
<dbReference type="FunFam" id="3.40.50.300:FF:000029">
    <property type="entry name" value="Elongation factor G"/>
    <property type="match status" value="1"/>
</dbReference>
<dbReference type="Gene3D" id="3.30.230.10">
    <property type="match status" value="1"/>
</dbReference>
<dbReference type="Gene3D" id="3.30.70.240">
    <property type="match status" value="1"/>
</dbReference>
<dbReference type="Gene3D" id="3.30.70.870">
    <property type="entry name" value="Elongation Factor G (Translational Gtpase), domain 3"/>
    <property type="match status" value="1"/>
</dbReference>
<dbReference type="Gene3D" id="3.40.50.300">
    <property type="entry name" value="P-loop containing nucleotide triphosphate hydrolases"/>
    <property type="match status" value="1"/>
</dbReference>
<dbReference type="Gene3D" id="2.40.30.10">
    <property type="entry name" value="Translation factors"/>
    <property type="match status" value="1"/>
</dbReference>
<dbReference type="HAMAP" id="MF_00054_B">
    <property type="entry name" value="EF_G_EF_2_B"/>
    <property type="match status" value="1"/>
</dbReference>
<dbReference type="InterPro" id="IPR041095">
    <property type="entry name" value="EFG_II"/>
</dbReference>
<dbReference type="InterPro" id="IPR009022">
    <property type="entry name" value="EFG_III"/>
</dbReference>
<dbReference type="InterPro" id="IPR035647">
    <property type="entry name" value="EFG_III/V"/>
</dbReference>
<dbReference type="InterPro" id="IPR047872">
    <property type="entry name" value="EFG_IV"/>
</dbReference>
<dbReference type="InterPro" id="IPR035649">
    <property type="entry name" value="EFG_V"/>
</dbReference>
<dbReference type="InterPro" id="IPR000640">
    <property type="entry name" value="EFG_V-like"/>
</dbReference>
<dbReference type="InterPro" id="IPR004161">
    <property type="entry name" value="EFTu-like_2"/>
</dbReference>
<dbReference type="InterPro" id="IPR031157">
    <property type="entry name" value="G_TR_CS"/>
</dbReference>
<dbReference type="InterPro" id="IPR027417">
    <property type="entry name" value="P-loop_NTPase"/>
</dbReference>
<dbReference type="InterPro" id="IPR020568">
    <property type="entry name" value="Ribosomal_Su5_D2-typ_SF"/>
</dbReference>
<dbReference type="InterPro" id="IPR014721">
    <property type="entry name" value="Ribsml_uS5_D2-typ_fold_subgr"/>
</dbReference>
<dbReference type="InterPro" id="IPR005225">
    <property type="entry name" value="Small_GTP-bd"/>
</dbReference>
<dbReference type="InterPro" id="IPR000795">
    <property type="entry name" value="T_Tr_GTP-bd_dom"/>
</dbReference>
<dbReference type="InterPro" id="IPR009000">
    <property type="entry name" value="Transl_B-barrel_sf"/>
</dbReference>
<dbReference type="InterPro" id="IPR004540">
    <property type="entry name" value="Transl_elong_EFG/EF2"/>
</dbReference>
<dbReference type="InterPro" id="IPR005517">
    <property type="entry name" value="Transl_elong_EFG/EF2_IV"/>
</dbReference>
<dbReference type="NCBIfam" id="TIGR00484">
    <property type="entry name" value="EF-G"/>
    <property type="match status" value="1"/>
</dbReference>
<dbReference type="NCBIfam" id="NF009381">
    <property type="entry name" value="PRK12740.1-5"/>
    <property type="match status" value="1"/>
</dbReference>
<dbReference type="NCBIfam" id="TIGR00231">
    <property type="entry name" value="small_GTP"/>
    <property type="match status" value="1"/>
</dbReference>
<dbReference type="PANTHER" id="PTHR43261:SF1">
    <property type="entry name" value="RIBOSOME-RELEASING FACTOR 2, MITOCHONDRIAL"/>
    <property type="match status" value="1"/>
</dbReference>
<dbReference type="PANTHER" id="PTHR43261">
    <property type="entry name" value="TRANSLATION ELONGATION FACTOR G-RELATED"/>
    <property type="match status" value="1"/>
</dbReference>
<dbReference type="Pfam" id="PF00679">
    <property type="entry name" value="EFG_C"/>
    <property type="match status" value="1"/>
</dbReference>
<dbReference type="Pfam" id="PF14492">
    <property type="entry name" value="EFG_III"/>
    <property type="match status" value="1"/>
</dbReference>
<dbReference type="Pfam" id="PF03764">
    <property type="entry name" value="EFG_IV"/>
    <property type="match status" value="1"/>
</dbReference>
<dbReference type="Pfam" id="PF00009">
    <property type="entry name" value="GTP_EFTU"/>
    <property type="match status" value="1"/>
</dbReference>
<dbReference type="Pfam" id="PF03144">
    <property type="entry name" value="GTP_EFTU_D2"/>
    <property type="match status" value="1"/>
</dbReference>
<dbReference type="PRINTS" id="PR00315">
    <property type="entry name" value="ELONGATNFCT"/>
</dbReference>
<dbReference type="SMART" id="SM00838">
    <property type="entry name" value="EFG_C"/>
    <property type="match status" value="1"/>
</dbReference>
<dbReference type="SMART" id="SM00889">
    <property type="entry name" value="EFG_IV"/>
    <property type="match status" value="1"/>
</dbReference>
<dbReference type="SUPFAM" id="SSF54980">
    <property type="entry name" value="EF-G C-terminal domain-like"/>
    <property type="match status" value="2"/>
</dbReference>
<dbReference type="SUPFAM" id="SSF52540">
    <property type="entry name" value="P-loop containing nucleoside triphosphate hydrolases"/>
    <property type="match status" value="1"/>
</dbReference>
<dbReference type="SUPFAM" id="SSF54211">
    <property type="entry name" value="Ribosomal protein S5 domain 2-like"/>
    <property type="match status" value="1"/>
</dbReference>
<dbReference type="SUPFAM" id="SSF50447">
    <property type="entry name" value="Translation proteins"/>
    <property type="match status" value="1"/>
</dbReference>
<dbReference type="PROSITE" id="PS00301">
    <property type="entry name" value="G_TR_1"/>
    <property type="match status" value="1"/>
</dbReference>
<dbReference type="PROSITE" id="PS51722">
    <property type="entry name" value="G_TR_2"/>
    <property type="match status" value="1"/>
</dbReference>
<accession>Q8EX19</accession>
<keyword id="KW-0963">Cytoplasm</keyword>
<keyword id="KW-0251">Elongation factor</keyword>
<keyword id="KW-0342">GTP-binding</keyword>
<keyword id="KW-0547">Nucleotide-binding</keyword>
<keyword id="KW-0648">Protein biosynthesis</keyword>
<keyword id="KW-1185">Reference proteome</keyword>
<sequence length="682" mass="75996">MARKFDIQKFRNFGIMAHIDAGKTTTSERILFHSGRTHKIGEVHDGGATMDWMEQEKERGITITSAATYVTWKDCELNLIDTPGHVDFTVEVERSLRVLDGAVAVLDAQNGVEPQTETVWRQASKYKVPRIVYVNKMDKTGADFKMCLESLNERLAAHAVAIQLPIGAEANFNGIINLVTMQAYMYDGKQDEEFKVVEIPADMKKEAEEMRHHMIEEVVNFDDEIMEKYLNGNELSEDDIKKCIRKGVLTAEFFPVVCGTSFKNKGVKALLDAVVDYLPSPVDVPPIKGYKDDGSEILIKNEDDGPLAALAFKIATDPYVGKLTFIRVYSGVLKKGSYVLNATKGIKERVSRLVKMHSNNREEIDEIRAGDICAVIGLKDTVTGNSLSSEEKELHLEAMNFAEPVISLAVEPKTKADQEKMAIALSKLSEEDPTFRTYTDDETNQTIISGMGELHLEIIVDRLRREFKVEVNVGAPQVSYRETFTKEADSEGKYIKQSGGRGQYGHVFIKFEPNPEKGFEFVDKIVGGKIPKEYIKPIKAGLEDAMKAGPLSGFPMIDVKATLYDGSYHDVDSSEMAYKIAASMALKEASKTAGLVLLEPIMAVEVTVPEQYFGDAMGDISSRRGSIEGQEQRGNTQVIKAKVPLKEMFGYATDLRSFTQGRGNYVYAFSHYEKAPKSLLKK</sequence>
<gene>
    <name evidence="1" type="primary">fusA</name>
    <name type="ordered locus">MYPE310</name>
</gene>